<gene>
    <name type="primary">amiE</name>
    <name type="ordered locus">HP_0294</name>
</gene>
<dbReference type="EC" id="3.5.1.4"/>
<dbReference type="EMBL" id="Y12252">
    <property type="protein sequence ID" value="CAA72932.1"/>
    <property type="molecule type" value="Genomic_DNA"/>
</dbReference>
<dbReference type="EMBL" id="AE000511">
    <property type="protein sequence ID" value="AAD07363.1"/>
    <property type="molecule type" value="Genomic_DNA"/>
</dbReference>
<dbReference type="PIR" id="F64556">
    <property type="entry name" value="F64556"/>
</dbReference>
<dbReference type="RefSeq" id="NP_207092.1">
    <property type="nucleotide sequence ID" value="NC_000915.1"/>
</dbReference>
<dbReference type="RefSeq" id="WP_001215729.1">
    <property type="nucleotide sequence ID" value="NC_018939.1"/>
</dbReference>
<dbReference type="SMR" id="O25067"/>
<dbReference type="IntAct" id="O25067">
    <property type="interactions" value="7"/>
</dbReference>
<dbReference type="MINT" id="O25067"/>
<dbReference type="STRING" id="85962.HP_0294"/>
<dbReference type="PaxDb" id="85962-C694_01485"/>
<dbReference type="EnsemblBacteria" id="AAD07363">
    <property type="protein sequence ID" value="AAD07363"/>
    <property type="gene ID" value="HP_0294"/>
</dbReference>
<dbReference type="KEGG" id="heo:C694_01485"/>
<dbReference type="KEGG" id="hpy:HP_0294"/>
<dbReference type="PATRIC" id="fig|85962.47.peg.314"/>
<dbReference type="eggNOG" id="COG0388">
    <property type="taxonomic scope" value="Bacteria"/>
</dbReference>
<dbReference type="InParanoid" id="O25067"/>
<dbReference type="OrthoDB" id="9811121at2"/>
<dbReference type="PhylomeDB" id="O25067"/>
<dbReference type="Proteomes" id="UP000000429">
    <property type="component" value="Chromosome"/>
</dbReference>
<dbReference type="GO" id="GO:0004040">
    <property type="term" value="F:amidase activity"/>
    <property type="evidence" value="ECO:0007669"/>
    <property type="project" value="UniProtKB-UniRule"/>
</dbReference>
<dbReference type="GO" id="GO:0016811">
    <property type="term" value="F:hydrolase activity, acting on carbon-nitrogen (but not peptide) bonds, in linear amides"/>
    <property type="evidence" value="ECO:0000318"/>
    <property type="project" value="GO_Central"/>
</dbReference>
<dbReference type="GO" id="GO:0008152">
    <property type="term" value="P:metabolic process"/>
    <property type="evidence" value="ECO:0000315"/>
    <property type="project" value="CACAO"/>
</dbReference>
<dbReference type="CDD" id="cd07565">
    <property type="entry name" value="aliphatic_amidase"/>
    <property type="match status" value="1"/>
</dbReference>
<dbReference type="FunFam" id="3.60.110.10:FF:000014">
    <property type="entry name" value="Aliphatic amidase"/>
    <property type="match status" value="1"/>
</dbReference>
<dbReference type="Gene3D" id="3.60.110.10">
    <property type="entry name" value="Carbon-nitrogen hydrolase"/>
    <property type="match status" value="1"/>
</dbReference>
<dbReference type="HAMAP" id="MF_01242">
    <property type="entry name" value="Aliphatic_amidase"/>
    <property type="match status" value="1"/>
</dbReference>
<dbReference type="InterPro" id="IPR050345">
    <property type="entry name" value="Aliph_Amidase/BUP"/>
</dbReference>
<dbReference type="InterPro" id="IPR023719">
    <property type="entry name" value="Aliphatic_amidase"/>
</dbReference>
<dbReference type="InterPro" id="IPR003010">
    <property type="entry name" value="C-N_Hydrolase"/>
</dbReference>
<dbReference type="InterPro" id="IPR036526">
    <property type="entry name" value="C-N_Hydrolase_sf"/>
</dbReference>
<dbReference type="NCBIfam" id="NF009802">
    <property type="entry name" value="PRK13286.1"/>
    <property type="match status" value="1"/>
</dbReference>
<dbReference type="PANTHER" id="PTHR43674:SF14">
    <property type="entry name" value="ALIPHATIC AMIDASE"/>
    <property type="match status" value="1"/>
</dbReference>
<dbReference type="PANTHER" id="PTHR43674">
    <property type="entry name" value="NITRILASE C965.09-RELATED"/>
    <property type="match status" value="1"/>
</dbReference>
<dbReference type="Pfam" id="PF00795">
    <property type="entry name" value="CN_hydrolase"/>
    <property type="match status" value="1"/>
</dbReference>
<dbReference type="SUPFAM" id="SSF56317">
    <property type="entry name" value="Carbon-nitrogen hydrolase"/>
    <property type="match status" value="1"/>
</dbReference>
<dbReference type="PROSITE" id="PS50263">
    <property type="entry name" value="CN_HYDROLASE"/>
    <property type="match status" value="1"/>
</dbReference>
<organism>
    <name type="scientific">Helicobacter pylori (strain ATCC 700392 / 26695)</name>
    <name type="common">Campylobacter pylori</name>
    <dbReference type="NCBI Taxonomy" id="85962"/>
    <lineage>
        <taxon>Bacteria</taxon>
        <taxon>Pseudomonadati</taxon>
        <taxon>Campylobacterota</taxon>
        <taxon>Epsilonproteobacteria</taxon>
        <taxon>Campylobacterales</taxon>
        <taxon>Helicobacteraceae</taxon>
        <taxon>Helicobacter</taxon>
    </lineage>
</organism>
<protein>
    <recommendedName>
        <fullName>Aliphatic amidase</fullName>
        <ecNumber>3.5.1.4</ecNumber>
    </recommendedName>
    <alternativeName>
        <fullName>Acylamide amidohydrolase</fullName>
    </alternativeName>
</protein>
<accession>O25067</accession>
<accession>O32644</accession>
<name>AMIE_HELPY</name>
<sequence length="339" mass="37713">MRHGDISSSPDTVGVAVVNYKMPRLHTKNEVLENCRNIAKVIGGVKQGLPGLDLIIFPEYSTHGIMYDRQEMFDTAASVPGEETAIFAEACKKNKVWGVFSLTGEKHEQAKKNPYNTLILVNDKGEIVQKYRKILPWCPIECWYPGDKTYVVDGPKGLKVSLIICDDGNYPEIWRDCAMRGAELIVRCQGYMYPAKEQQIAIVKAMAWANQCYVAVANATGFDGVYSYFGHSSIIGFDGHTLGECGEEENGLQYAQLSVQQIRDARKYDQSQNQLFKLLHRGYSGVFASGDGDKGVAECPFEFYKTWVNDPKKAQENVEKITRPSVGVAACPVGDLPTK</sequence>
<proteinExistence type="evidence at protein level"/>
<keyword id="KW-0903">Direct protein sequencing</keyword>
<keyword id="KW-0378">Hydrolase</keyword>
<keyword id="KW-1185">Reference proteome</keyword>
<feature type="chain" id="PRO_0000204058" description="Aliphatic amidase">
    <location>
        <begin position="1"/>
        <end position="339"/>
    </location>
</feature>
<feature type="domain" description="CN hydrolase" evidence="2">
    <location>
        <begin position="13"/>
        <end position="259"/>
    </location>
</feature>
<feature type="active site" description="Proton acceptor" evidence="1">
    <location>
        <position position="59"/>
    </location>
</feature>
<feature type="active site" description="Proton donor" evidence="1">
    <location>
        <position position="133"/>
    </location>
</feature>
<feature type="active site" description="Nucleophile" evidence="1">
    <location>
        <position position="165"/>
    </location>
</feature>
<feature type="mutagenesis site" description="Loss of activity." evidence="3">
    <original>C</original>
    <variation>S</variation>
    <variation>A</variation>
    <location>
        <position position="165"/>
    </location>
</feature>
<feature type="mutagenesis site" description="Loss of activity." evidence="3">
    <original>D</original>
    <variation>A</variation>
    <location>
        <position position="167"/>
    </location>
</feature>
<feature type="sequence conflict" description="In Ref. 1; CAA72932." evidence="6" ref="1">
    <original>NE</original>
    <variation>EQ</variation>
    <location>
        <begin position="29"/>
        <end position="30"/>
    </location>
</feature>
<feature type="sequence conflict" description="In Ref. 1; CAA72932." evidence="6" ref="1">
    <original>A</original>
    <variation>D</variation>
    <location>
        <position position="329"/>
    </location>
</feature>
<comment type="function">
    <text>Catalyzes the hydrolysis of short-chain aliphatic amides to their corresponding organic acids with release of ammonia. Hydrolyzes propionamide, acetamide and acrylamide, but has no activity with formamide or urea. The natural substrates of AmiE in its gastric environment are not known. Probably functions to ensure nitrogen supply to the bacteria.</text>
</comment>
<comment type="function">
    <text>Also exhibits in vitro acyl transferase activity, transferring the acyl moiety of short-chain amides to hydroxylamine to form hydroxamates. The highest level of acyl transfer activity is observed with acetamide.</text>
</comment>
<comment type="catalytic activity">
    <reaction evidence="3 5">
        <text>a monocarboxylic acid amide + H2O = a monocarboxylate + NH4(+)</text>
        <dbReference type="Rhea" id="RHEA:12020"/>
        <dbReference type="ChEBI" id="CHEBI:15377"/>
        <dbReference type="ChEBI" id="CHEBI:28938"/>
        <dbReference type="ChEBI" id="CHEBI:35757"/>
        <dbReference type="ChEBI" id="CHEBI:83628"/>
        <dbReference type="EC" id="3.5.1.4"/>
    </reaction>
</comment>
<comment type="activity regulation">
    <text evidence="3">Inhibited by iodoacetate.</text>
</comment>
<comment type="biophysicochemical properties">
    <phDependence>
        <text evidence="3">Optimum pH is 7.</text>
    </phDependence>
    <temperatureDependence>
        <text evidence="3">Optimum temperature is 55 degrees Celsius.</text>
    </temperatureDependence>
</comment>
<comment type="subunit">
    <text evidence="3">Homotetramer.</text>
</comment>
<comment type="induction">
    <text evidence="4">Repressed by iron via the binding of the Fur protein to the amiE promoter.</text>
</comment>
<comment type="miscellaneous">
    <text evidence="7">Asp-167 is probably not involved in the catalytic mechanism, but is probably involved instead in maintenance of the structural integrity of the amidase.</text>
</comment>
<comment type="miscellaneous">
    <text evidence="8">Expression of the amiE gene is stimulated in a mutant deficient in urease activity, suggesting that production of this enzyme is regulated to maintain intracellular nitrogen balance in H.pylori.</text>
</comment>
<comment type="similarity">
    <text evidence="6">Belongs to the carbon-nitrogen hydrolase superfamily. Aliphatic amidase family.</text>
</comment>
<reference key="1">
    <citation type="journal article" date="1997" name="Mol. Microbiol.">
        <title>Identification and characterization of an aliphatic amidase in Helicobacter pylori.</title>
        <authorList>
            <person name="Skouloubris S."/>
            <person name="Labigne A."/>
            <person name="De Reuse H."/>
        </authorList>
    </citation>
    <scope>NUCLEOTIDE SEQUENCE [GENOMIC DNA]</scope>
    <scope>PROTEIN SEQUENCE OF 96-106 AND 160-174</scope>
    <scope>FUNCTION</scope>
    <scope>CATALYTIC ACTIVITY</scope>
    <source>
        <strain>85P</strain>
    </source>
</reference>
<reference key="2">
    <citation type="journal article" date="1997" name="Nature">
        <title>The complete genome sequence of the gastric pathogen Helicobacter pylori.</title>
        <authorList>
            <person name="Tomb J.-F."/>
            <person name="White O."/>
            <person name="Kerlavage A.R."/>
            <person name="Clayton R.A."/>
            <person name="Sutton G.G."/>
            <person name="Fleischmann R.D."/>
            <person name="Ketchum K.A."/>
            <person name="Klenk H.-P."/>
            <person name="Gill S.R."/>
            <person name="Dougherty B.A."/>
            <person name="Nelson K.E."/>
            <person name="Quackenbush J."/>
            <person name="Zhou L."/>
            <person name="Kirkness E.F."/>
            <person name="Peterson S.N."/>
            <person name="Loftus B.J."/>
            <person name="Richardson D.L."/>
            <person name="Dodson R.J."/>
            <person name="Khalak H.G."/>
            <person name="Glodek A."/>
            <person name="McKenney K."/>
            <person name="FitzGerald L.M."/>
            <person name="Lee N."/>
            <person name="Adams M.D."/>
            <person name="Hickey E.K."/>
            <person name="Berg D.E."/>
            <person name="Gocayne J.D."/>
            <person name="Utterback T.R."/>
            <person name="Peterson J.D."/>
            <person name="Kelley J.M."/>
            <person name="Cotton M.D."/>
            <person name="Weidman J.F."/>
            <person name="Fujii C."/>
            <person name="Bowman C."/>
            <person name="Watthey L."/>
            <person name="Wallin E."/>
            <person name="Hayes W.S."/>
            <person name="Borodovsky M."/>
            <person name="Karp P.D."/>
            <person name="Smith H.O."/>
            <person name="Fraser C.M."/>
            <person name="Venter J.C."/>
        </authorList>
    </citation>
    <scope>NUCLEOTIDE SEQUENCE [LARGE SCALE GENOMIC DNA]</scope>
    <source>
        <strain>ATCC 700392 / 26695</strain>
    </source>
</reference>
<reference key="3">
    <citation type="journal article" date="2001" name="Mol. Microbiol.">
        <title>The AmiE aliphatic amidase and AmiF formamidase of Helicobacter pylori: natural evolution of two enzyme paralogues.</title>
        <authorList>
            <person name="Skouloubris S."/>
            <person name="Labigne A."/>
            <person name="De Reuse H."/>
        </authorList>
    </citation>
    <scope>FUNCTION</scope>
    <scope>CATALYTIC ACTIVITY</scope>
    <scope>ACTIVITY REGULATION</scope>
    <scope>BIOPHYSICOCHEMICAL PROPERTIES</scope>
    <scope>SUBUNIT</scope>
    <scope>MUTAGENESIS OF CYS-165 AND ASP-167</scope>
</reference>
<reference key="4">
    <citation type="journal article" date="2003" name="J. Biol. Chem.">
        <title>Differential regulation of amidase- and formamidase-mediated ammonia production by the Helicobacter pylori fur repressor.</title>
        <authorList>
            <person name="van Vliet A.H.M."/>
            <person name="Stoof J."/>
            <person name="Poppelaars S.W."/>
            <person name="Bereswill S."/>
            <person name="Homuth G."/>
            <person name="Kist M."/>
            <person name="Kuipers E.J."/>
            <person name="Kusters J.G."/>
        </authorList>
    </citation>
    <scope>TRANSCRIPTIONAL REGULATION</scope>
</reference>
<evidence type="ECO:0000250" key="1"/>
<evidence type="ECO:0000255" key="2">
    <source>
        <dbReference type="PROSITE-ProRule" id="PRU00054"/>
    </source>
</evidence>
<evidence type="ECO:0000269" key="3">
    <source>
    </source>
</evidence>
<evidence type="ECO:0000269" key="4">
    <source>
    </source>
</evidence>
<evidence type="ECO:0000269" key="5">
    <source>
    </source>
</evidence>
<evidence type="ECO:0000305" key="6"/>
<evidence type="ECO:0000305" key="7">
    <source>
    </source>
</evidence>
<evidence type="ECO:0000305" key="8">
    <source>
    </source>
</evidence>